<reference key="1">
    <citation type="journal article" date="2005" name="Nature">
        <title>The genome of the social amoeba Dictyostelium discoideum.</title>
        <authorList>
            <person name="Eichinger L."/>
            <person name="Pachebat J.A."/>
            <person name="Gloeckner G."/>
            <person name="Rajandream M.A."/>
            <person name="Sucgang R."/>
            <person name="Berriman M."/>
            <person name="Song J."/>
            <person name="Olsen R."/>
            <person name="Szafranski K."/>
            <person name="Xu Q."/>
            <person name="Tunggal B."/>
            <person name="Kummerfeld S."/>
            <person name="Madera M."/>
            <person name="Konfortov B.A."/>
            <person name="Rivero F."/>
            <person name="Bankier A.T."/>
            <person name="Lehmann R."/>
            <person name="Hamlin N."/>
            <person name="Davies R."/>
            <person name="Gaudet P."/>
            <person name="Fey P."/>
            <person name="Pilcher K."/>
            <person name="Chen G."/>
            <person name="Saunders D."/>
            <person name="Sodergren E.J."/>
            <person name="Davis P."/>
            <person name="Kerhornou A."/>
            <person name="Nie X."/>
            <person name="Hall N."/>
            <person name="Anjard C."/>
            <person name="Hemphill L."/>
            <person name="Bason N."/>
            <person name="Farbrother P."/>
            <person name="Desany B."/>
            <person name="Just E."/>
            <person name="Morio T."/>
            <person name="Rost R."/>
            <person name="Churcher C.M."/>
            <person name="Cooper J."/>
            <person name="Haydock S."/>
            <person name="van Driessche N."/>
            <person name="Cronin A."/>
            <person name="Goodhead I."/>
            <person name="Muzny D.M."/>
            <person name="Mourier T."/>
            <person name="Pain A."/>
            <person name="Lu M."/>
            <person name="Harper D."/>
            <person name="Lindsay R."/>
            <person name="Hauser H."/>
            <person name="James K.D."/>
            <person name="Quiles M."/>
            <person name="Madan Babu M."/>
            <person name="Saito T."/>
            <person name="Buchrieser C."/>
            <person name="Wardroper A."/>
            <person name="Felder M."/>
            <person name="Thangavelu M."/>
            <person name="Johnson D."/>
            <person name="Knights A."/>
            <person name="Loulseged H."/>
            <person name="Mungall K.L."/>
            <person name="Oliver K."/>
            <person name="Price C."/>
            <person name="Quail M.A."/>
            <person name="Urushihara H."/>
            <person name="Hernandez J."/>
            <person name="Rabbinowitsch E."/>
            <person name="Steffen D."/>
            <person name="Sanders M."/>
            <person name="Ma J."/>
            <person name="Kohara Y."/>
            <person name="Sharp S."/>
            <person name="Simmonds M.N."/>
            <person name="Spiegler S."/>
            <person name="Tivey A."/>
            <person name="Sugano S."/>
            <person name="White B."/>
            <person name="Walker D."/>
            <person name="Woodward J.R."/>
            <person name="Winckler T."/>
            <person name="Tanaka Y."/>
            <person name="Shaulsky G."/>
            <person name="Schleicher M."/>
            <person name="Weinstock G.M."/>
            <person name="Rosenthal A."/>
            <person name="Cox E.C."/>
            <person name="Chisholm R.L."/>
            <person name="Gibbs R.A."/>
            <person name="Loomis W.F."/>
            <person name="Platzer M."/>
            <person name="Kay R.R."/>
            <person name="Williams J.G."/>
            <person name="Dear P.H."/>
            <person name="Noegel A.A."/>
            <person name="Barrell B.G."/>
            <person name="Kuspa A."/>
        </authorList>
    </citation>
    <scope>NUCLEOTIDE SEQUENCE [LARGE SCALE GENOMIC DNA]</scope>
    <source>
        <strain>AX4</strain>
    </source>
</reference>
<name>Y7317_DICDI</name>
<sequence length="612" mass="66531">MMSYEQQQYLTQQQQMNNFTNLTNLTNMNSVNHNFGLMQQQQLVPQQPQLAPPPPPQHQQIPISTQSTPNSTSSTTTTTTTTTSTTTAPTSNSKKSKTTPSNGNKPTSGMVTPIISTPLQLSSVNTPLQQYQPNSQLQPPSPIIKKSSLSTTPNNINNNNNNNNNTNTISPKTKGGNNSAPTPTYSSATINSPYLEVIEQESISVENVIINNRNSNVHIVVKNTSFVLKIRSLDLNKINFSSSCVKAGLYYVNEPLKEVSFIQNPPITYVGSSCKNGEQFAIDIKISILSSQHQGNLFYIMVHVSPENQKSITKDGKEAIVPTTSSTSTSSSATSTTSSSTSSTTTTSSTSNSSTPGSTMGCINGGNSILSFPIRVVSKVDHIKKDPNGVCEKKQTFIDILTDRLSSLENLHLTQSALLSNMLKERGIPESEYSFSEYSEPELISCAFSTSPPSSPFSISGGGGSGGIPSQSGIIKKHKKPSGSSGYGDNKNTAERFLECFNRVIKVYKEHYGKKSFELSKFISSLDNDEKNILVDLLESFTFDESSQVKSLDNNDHCEDCNCETCPYKQQAEQFMLLSPVICFPSPAIKSSNNTNNTNNTNNTNNNTVVTI</sequence>
<organism>
    <name type="scientific">Dictyostelium discoideum</name>
    <name type="common">Social amoeba</name>
    <dbReference type="NCBI Taxonomy" id="44689"/>
    <lineage>
        <taxon>Eukaryota</taxon>
        <taxon>Amoebozoa</taxon>
        <taxon>Evosea</taxon>
        <taxon>Eumycetozoa</taxon>
        <taxon>Dictyostelia</taxon>
        <taxon>Dictyosteliales</taxon>
        <taxon>Dictyosteliaceae</taxon>
        <taxon>Dictyostelium</taxon>
    </lineage>
</organism>
<accession>Q54KJ1</accession>
<evidence type="ECO:0000256" key="1">
    <source>
        <dbReference type="SAM" id="MobiDB-lite"/>
    </source>
</evidence>
<gene>
    <name type="ORF">DDB_G0287317</name>
</gene>
<feature type="chain" id="PRO_0000389557" description="Uncharacterized protein DDB_G0287317">
    <location>
        <begin position="1"/>
        <end position="612"/>
    </location>
</feature>
<feature type="region of interest" description="Disordered" evidence="1">
    <location>
        <begin position="46"/>
        <end position="113"/>
    </location>
</feature>
<feature type="region of interest" description="Disordered" evidence="1">
    <location>
        <begin position="129"/>
        <end position="185"/>
    </location>
</feature>
<feature type="region of interest" description="Disordered" evidence="1">
    <location>
        <begin position="313"/>
        <end position="360"/>
    </location>
</feature>
<feature type="region of interest" description="Disordered" evidence="1">
    <location>
        <begin position="457"/>
        <end position="488"/>
    </location>
</feature>
<feature type="region of interest" description="Disordered" evidence="1">
    <location>
        <begin position="593"/>
        <end position="612"/>
    </location>
</feature>
<feature type="compositionally biased region" description="Low complexity" evidence="1">
    <location>
        <begin position="58"/>
        <end position="102"/>
    </location>
</feature>
<feature type="compositionally biased region" description="Polar residues" evidence="1">
    <location>
        <begin position="103"/>
        <end position="113"/>
    </location>
</feature>
<feature type="compositionally biased region" description="Polar residues" evidence="1">
    <location>
        <begin position="129"/>
        <end position="138"/>
    </location>
</feature>
<feature type="compositionally biased region" description="Low complexity" evidence="1">
    <location>
        <begin position="143"/>
        <end position="169"/>
    </location>
</feature>
<feature type="compositionally biased region" description="Polar residues" evidence="1">
    <location>
        <begin position="175"/>
        <end position="185"/>
    </location>
</feature>
<feature type="compositionally biased region" description="Low complexity" evidence="1">
    <location>
        <begin position="323"/>
        <end position="359"/>
    </location>
</feature>
<dbReference type="EMBL" id="AAFI02000100">
    <property type="protein sequence ID" value="EAL63726.1"/>
    <property type="molecule type" value="Genomic_DNA"/>
</dbReference>
<dbReference type="RefSeq" id="XP_637232.1">
    <property type="nucleotide sequence ID" value="XM_632140.1"/>
</dbReference>
<dbReference type="SMR" id="Q54KJ1"/>
<dbReference type="FunCoup" id="Q54KJ1">
    <property type="interactions" value="225"/>
</dbReference>
<dbReference type="STRING" id="44689.Q54KJ1"/>
<dbReference type="GlyGen" id="Q54KJ1">
    <property type="glycosylation" value="2 sites"/>
</dbReference>
<dbReference type="PaxDb" id="44689-DDB0233396"/>
<dbReference type="EnsemblProtists" id="EAL63726">
    <property type="protein sequence ID" value="EAL63726"/>
    <property type="gene ID" value="DDB_G0287317"/>
</dbReference>
<dbReference type="GeneID" id="8626063"/>
<dbReference type="KEGG" id="ddi:DDB_G0287317"/>
<dbReference type="dictyBase" id="DDB_G0287317">
    <property type="gene designation" value="spaA"/>
</dbReference>
<dbReference type="VEuPathDB" id="AmoebaDB:DDB_G0287317"/>
<dbReference type="eggNOG" id="ENOG502RBWV">
    <property type="taxonomic scope" value="Eukaryota"/>
</dbReference>
<dbReference type="HOGENOM" id="CLU_446519_0_0_1"/>
<dbReference type="InParanoid" id="Q54KJ1"/>
<dbReference type="PRO" id="PR:Q54KJ1"/>
<dbReference type="Proteomes" id="UP000002195">
    <property type="component" value="Chromosome 5"/>
</dbReference>
<dbReference type="GO" id="GO:0005634">
    <property type="term" value="C:nucleus"/>
    <property type="evidence" value="ECO:0000314"/>
    <property type="project" value="dictyBase"/>
</dbReference>
<dbReference type="GO" id="GO:0003700">
    <property type="term" value="F:DNA-binding transcription factor activity"/>
    <property type="evidence" value="ECO:0000314"/>
    <property type="project" value="dictyBase"/>
</dbReference>
<dbReference type="GO" id="GO:0043565">
    <property type="term" value="F:sequence-specific DNA binding"/>
    <property type="evidence" value="ECO:0000250"/>
    <property type="project" value="dictyBase"/>
</dbReference>
<dbReference type="GO" id="GO:0000976">
    <property type="term" value="F:transcription cis-regulatory region binding"/>
    <property type="evidence" value="ECO:0000314"/>
    <property type="project" value="dictyBase"/>
</dbReference>
<dbReference type="GO" id="GO:0045893">
    <property type="term" value="P:positive regulation of DNA-templated transcription"/>
    <property type="evidence" value="ECO:0000314"/>
    <property type="project" value="dictyBase"/>
</dbReference>
<dbReference type="GO" id="GO:0044671">
    <property type="term" value="P:sorocarp spore cell differentiation"/>
    <property type="evidence" value="ECO:0000315"/>
    <property type="project" value="dictyBase"/>
</dbReference>
<dbReference type="InterPro" id="IPR040430">
    <property type="entry name" value="CudA-like"/>
</dbReference>
<dbReference type="PANTHER" id="PTHR38092:SF6">
    <property type="entry name" value="C2 NT-TYPE DOMAIN-CONTAINING PROTEIN"/>
    <property type="match status" value="1"/>
</dbReference>
<dbReference type="PANTHER" id="PTHR38092">
    <property type="entry name" value="REGULATOR CUDA, PUTATIVE-RELATED"/>
    <property type="match status" value="1"/>
</dbReference>
<protein>
    <recommendedName>
        <fullName>Uncharacterized protein DDB_G0287317</fullName>
    </recommendedName>
</protein>
<proteinExistence type="predicted"/>
<keyword id="KW-1185">Reference proteome</keyword>